<proteinExistence type="inferred from homology"/>
<accession>Q5FKT3</accession>
<dbReference type="EC" id="2.7.7.6" evidence="1"/>
<dbReference type="EMBL" id="CP000033">
    <property type="protein sequence ID" value="AAV42691.1"/>
    <property type="molecule type" value="Genomic_DNA"/>
</dbReference>
<dbReference type="RefSeq" id="WP_003546835.1">
    <property type="nucleotide sequence ID" value="NC_006814.3"/>
</dbReference>
<dbReference type="RefSeq" id="YP_193722.1">
    <property type="nucleotide sequence ID" value="NC_006814.3"/>
</dbReference>
<dbReference type="SMR" id="Q5FKT3"/>
<dbReference type="STRING" id="272621.LBA0829"/>
<dbReference type="KEGG" id="lac:LBA0829"/>
<dbReference type="PATRIC" id="fig|272621.13.peg.792"/>
<dbReference type="eggNOG" id="COG5503">
    <property type="taxonomic scope" value="Bacteria"/>
</dbReference>
<dbReference type="HOGENOM" id="CLU_187518_0_0_9"/>
<dbReference type="OrthoDB" id="2147503at2"/>
<dbReference type="BioCyc" id="LACI272621:G1G49-841-MONOMER"/>
<dbReference type="Proteomes" id="UP000006381">
    <property type="component" value="Chromosome"/>
</dbReference>
<dbReference type="GO" id="GO:0000428">
    <property type="term" value="C:DNA-directed RNA polymerase complex"/>
    <property type="evidence" value="ECO:0007669"/>
    <property type="project" value="UniProtKB-KW"/>
</dbReference>
<dbReference type="GO" id="GO:0003677">
    <property type="term" value="F:DNA binding"/>
    <property type="evidence" value="ECO:0007669"/>
    <property type="project" value="UniProtKB-UniRule"/>
</dbReference>
<dbReference type="GO" id="GO:0003899">
    <property type="term" value="F:DNA-directed RNA polymerase activity"/>
    <property type="evidence" value="ECO:0007669"/>
    <property type="project" value="UniProtKB-UniRule"/>
</dbReference>
<dbReference type="GO" id="GO:0006351">
    <property type="term" value="P:DNA-templated transcription"/>
    <property type="evidence" value="ECO:0007669"/>
    <property type="project" value="UniProtKB-UniRule"/>
</dbReference>
<dbReference type="Gene3D" id="3.10.20.730">
    <property type="entry name" value="RNAP, epsilon subunit-like"/>
    <property type="match status" value="1"/>
</dbReference>
<dbReference type="HAMAP" id="MF_01553">
    <property type="entry name" value="RNApol_bact_RpoY"/>
    <property type="match status" value="1"/>
</dbReference>
<dbReference type="InterPro" id="IPR009907">
    <property type="entry name" value="RpoY"/>
</dbReference>
<dbReference type="NCBIfam" id="NF010188">
    <property type="entry name" value="PRK13667.1"/>
    <property type="match status" value="1"/>
</dbReference>
<dbReference type="Pfam" id="PF07288">
    <property type="entry name" value="RpoY"/>
    <property type="match status" value="1"/>
</dbReference>
<name>RPOY_LACAC</name>
<gene>
    <name evidence="1" type="primary">rpoY</name>
    <name type="ordered locus">LBA0829</name>
</gene>
<organism>
    <name type="scientific">Lactobacillus acidophilus (strain ATCC 700396 / NCK56 / N2 / NCFM)</name>
    <dbReference type="NCBI Taxonomy" id="272621"/>
    <lineage>
        <taxon>Bacteria</taxon>
        <taxon>Bacillati</taxon>
        <taxon>Bacillota</taxon>
        <taxon>Bacilli</taxon>
        <taxon>Lactobacillales</taxon>
        <taxon>Lactobacillaceae</taxon>
        <taxon>Lactobacillus</taxon>
    </lineage>
</organism>
<sequence length="73" mass="8736">MIYKVLYQKDKIVNPRRETTQTLYMEADNMVEARTMVEDNTPYNIELIQELTGNSLTYEKEHADFKLTKFDKK</sequence>
<protein>
    <recommendedName>
        <fullName evidence="1">DNA-directed RNA polymerase subunit epsilon</fullName>
        <shortName evidence="1">RNAP epsilon subunit</shortName>
        <ecNumber evidence="1">2.7.7.6</ecNumber>
    </recommendedName>
    <alternativeName>
        <fullName evidence="1">RNA polymerase epsilon subunit</fullName>
    </alternativeName>
    <alternativeName>
        <fullName evidence="1">Transcriptase subunit epsilon</fullName>
    </alternativeName>
</protein>
<reference key="1">
    <citation type="journal article" date="2005" name="Proc. Natl. Acad. Sci. U.S.A.">
        <title>Complete genome sequence of the probiotic lactic acid bacterium Lactobacillus acidophilus NCFM.</title>
        <authorList>
            <person name="Altermann E."/>
            <person name="Russell W.M."/>
            <person name="Azcarate-Peril M.A."/>
            <person name="Barrangou R."/>
            <person name="Buck B.L."/>
            <person name="McAuliffe O."/>
            <person name="Souther N."/>
            <person name="Dobson A."/>
            <person name="Duong T."/>
            <person name="Callanan M."/>
            <person name="Lick S."/>
            <person name="Hamrick A."/>
            <person name="Cano R."/>
            <person name="Klaenhammer T.R."/>
        </authorList>
    </citation>
    <scope>NUCLEOTIDE SEQUENCE [LARGE SCALE GENOMIC DNA]</scope>
    <source>
        <strain>ATCC 700396 / NCK56 / N2 / NCFM</strain>
    </source>
</reference>
<feature type="chain" id="PRO_0000163125" description="DNA-directed RNA polymerase subunit epsilon">
    <location>
        <begin position="1"/>
        <end position="73"/>
    </location>
</feature>
<comment type="function">
    <text evidence="1">A non-essential component of RNA polymerase (RNAP).</text>
</comment>
<comment type="catalytic activity">
    <reaction evidence="1">
        <text>RNA(n) + a ribonucleoside 5'-triphosphate = RNA(n+1) + diphosphate</text>
        <dbReference type="Rhea" id="RHEA:21248"/>
        <dbReference type="Rhea" id="RHEA-COMP:14527"/>
        <dbReference type="Rhea" id="RHEA-COMP:17342"/>
        <dbReference type="ChEBI" id="CHEBI:33019"/>
        <dbReference type="ChEBI" id="CHEBI:61557"/>
        <dbReference type="ChEBI" id="CHEBI:140395"/>
        <dbReference type="EC" id="2.7.7.6"/>
    </reaction>
</comment>
<comment type="subunit">
    <text evidence="1">RNAP is composed of a core of 2 alpha, a beta and a beta' subunit. The core is associated with a delta subunit, and at least one of epsilon or omega. When a sigma factor is associated with the core the holoenzyme is formed, which can initiate transcription.</text>
</comment>
<comment type="similarity">
    <text evidence="1">Belongs to the RNA polymerase subunit epsilon family.</text>
</comment>
<evidence type="ECO:0000255" key="1">
    <source>
        <dbReference type="HAMAP-Rule" id="MF_01553"/>
    </source>
</evidence>
<keyword id="KW-0240">DNA-directed RNA polymerase</keyword>
<keyword id="KW-0548">Nucleotidyltransferase</keyword>
<keyword id="KW-1185">Reference proteome</keyword>
<keyword id="KW-0804">Transcription</keyword>
<keyword id="KW-0808">Transferase</keyword>